<proteinExistence type="evidence at protein level"/>
<evidence type="ECO:0007829" key="1">
    <source>
        <dbReference type="PDB" id="8HKR"/>
    </source>
</evidence>
<organism>
    <name type="scientific">Mycobacterium tuberculosis (strain ATCC 25618 / H37Rv)</name>
    <dbReference type="NCBI Taxonomy" id="83332"/>
    <lineage>
        <taxon>Bacteria</taxon>
        <taxon>Bacillati</taxon>
        <taxon>Actinomycetota</taxon>
        <taxon>Actinomycetes</taxon>
        <taxon>Mycobacteriales</taxon>
        <taxon>Mycobacteriaceae</taxon>
        <taxon>Mycobacterium</taxon>
        <taxon>Mycobacterium tuberculosis complex</taxon>
    </lineage>
</organism>
<accession>P9WLL9</accession>
<accession>L0TA29</accession>
<accession>P0A5G1</accession>
<accession>Q10678</accession>
<reference key="1">
    <citation type="journal article" date="1998" name="Nature">
        <title>Deciphering the biology of Mycobacterium tuberculosis from the complete genome sequence.</title>
        <authorList>
            <person name="Cole S.T."/>
            <person name="Brosch R."/>
            <person name="Parkhill J."/>
            <person name="Garnier T."/>
            <person name="Churcher C.M."/>
            <person name="Harris D.E."/>
            <person name="Gordon S.V."/>
            <person name="Eiglmeier K."/>
            <person name="Gas S."/>
            <person name="Barry C.E. III"/>
            <person name="Tekaia F."/>
            <person name="Badcock K."/>
            <person name="Basham D."/>
            <person name="Brown D."/>
            <person name="Chillingworth T."/>
            <person name="Connor R."/>
            <person name="Davies R.M."/>
            <person name="Devlin K."/>
            <person name="Feltwell T."/>
            <person name="Gentles S."/>
            <person name="Hamlin N."/>
            <person name="Holroyd S."/>
            <person name="Hornsby T."/>
            <person name="Jagels K."/>
            <person name="Krogh A."/>
            <person name="McLean J."/>
            <person name="Moule S."/>
            <person name="Murphy L.D."/>
            <person name="Oliver S."/>
            <person name="Osborne J."/>
            <person name="Quail M.A."/>
            <person name="Rajandream M.A."/>
            <person name="Rogers J."/>
            <person name="Rutter S."/>
            <person name="Seeger K."/>
            <person name="Skelton S."/>
            <person name="Squares S."/>
            <person name="Squares R."/>
            <person name="Sulston J.E."/>
            <person name="Taylor K."/>
            <person name="Whitehead S."/>
            <person name="Barrell B.G."/>
        </authorList>
    </citation>
    <scope>NUCLEOTIDE SEQUENCE [LARGE SCALE GENOMIC DNA]</scope>
    <source>
        <strain>ATCC 25618 / H37Rv</strain>
    </source>
</reference>
<reference key="2">
    <citation type="journal article" date="2011" name="Mol. Cell. Proteomics">
        <title>Proteogenomic analysis of Mycobacterium tuberculosis by high resolution mass spectrometry.</title>
        <authorList>
            <person name="Kelkar D.S."/>
            <person name="Kumar D."/>
            <person name="Kumar P."/>
            <person name="Balakrishnan L."/>
            <person name="Muthusamy B."/>
            <person name="Yadav A.K."/>
            <person name="Shrivastava P."/>
            <person name="Marimuthu A."/>
            <person name="Anand S."/>
            <person name="Sundaram H."/>
            <person name="Kingsbury R."/>
            <person name="Harsha H.C."/>
            <person name="Nair B."/>
            <person name="Prasad T.S."/>
            <person name="Chauhan D.S."/>
            <person name="Katoch K."/>
            <person name="Katoch V.M."/>
            <person name="Kumar P."/>
            <person name="Chaerkady R."/>
            <person name="Ramachandran S."/>
            <person name="Dash D."/>
            <person name="Pandey A."/>
        </authorList>
    </citation>
    <scope>IDENTIFICATION BY MASS SPECTROMETRY [LARGE SCALE ANALYSIS]</scope>
    <source>
        <strain>ATCC 25618 / H37Rv</strain>
    </source>
</reference>
<gene>
    <name type="ordered locus">Rv2067c</name>
    <name type="ORF">MTCY49.06c</name>
</gene>
<name>Y2067_MYCTU</name>
<feature type="chain" id="PRO_0000103943" description="Uncharacterized protein Rv2067c">
    <location>
        <begin position="1"/>
        <end position="407"/>
    </location>
</feature>
<feature type="helix" evidence="1">
    <location>
        <begin position="27"/>
        <end position="33"/>
    </location>
</feature>
<feature type="helix" evidence="1">
    <location>
        <begin position="40"/>
        <end position="47"/>
    </location>
</feature>
<feature type="strand" evidence="1">
    <location>
        <begin position="58"/>
        <end position="63"/>
    </location>
</feature>
<feature type="turn" evidence="1">
    <location>
        <begin position="65"/>
        <end position="67"/>
    </location>
</feature>
<feature type="helix" evidence="1">
    <location>
        <begin position="68"/>
        <end position="75"/>
    </location>
</feature>
<feature type="strand" evidence="1">
    <location>
        <begin position="79"/>
        <end position="86"/>
    </location>
</feature>
<feature type="helix" evidence="1">
    <location>
        <begin position="88"/>
        <end position="101"/>
    </location>
</feature>
<feature type="strand" evidence="1">
    <location>
        <begin position="106"/>
        <end position="110"/>
    </location>
</feature>
<feature type="helix" evidence="1">
    <location>
        <begin position="113"/>
        <end position="119"/>
    </location>
</feature>
<feature type="strand" evidence="1">
    <location>
        <begin position="123"/>
        <end position="130"/>
    </location>
</feature>
<feature type="helix" evidence="1">
    <location>
        <begin position="132"/>
        <end position="134"/>
    </location>
</feature>
<feature type="helix" evidence="1">
    <location>
        <begin position="138"/>
        <end position="147"/>
    </location>
</feature>
<feature type="strand" evidence="1">
    <location>
        <begin position="149"/>
        <end position="161"/>
    </location>
</feature>
<feature type="helix" evidence="1">
    <location>
        <begin position="163"/>
        <end position="165"/>
    </location>
</feature>
<feature type="helix" evidence="1">
    <location>
        <begin position="166"/>
        <end position="177"/>
    </location>
</feature>
<feature type="helix" evidence="1">
    <location>
        <begin position="184"/>
        <end position="195"/>
    </location>
</feature>
<feature type="helix" evidence="1">
    <location>
        <begin position="202"/>
        <end position="207"/>
    </location>
</feature>
<feature type="turn" evidence="1">
    <location>
        <begin position="211"/>
        <end position="214"/>
    </location>
</feature>
<feature type="helix" evidence="1">
    <location>
        <begin position="216"/>
        <end position="223"/>
    </location>
</feature>
<feature type="helix" evidence="1">
    <location>
        <begin position="233"/>
        <end position="242"/>
    </location>
</feature>
<feature type="strand" evidence="1">
    <location>
        <begin position="245"/>
        <end position="251"/>
    </location>
</feature>
<feature type="helix" evidence="1">
    <location>
        <begin position="254"/>
        <end position="256"/>
    </location>
</feature>
<feature type="turn" evidence="1">
    <location>
        <begin position="260"/>
        <end position="262"/>
    </location>
</feature>
<feature type="helix" evidence="1">
    <location>
        <begin position="267"/>
        <end position="274"/>
    </location>
</feature>
<feature type="helix" evidence="1">
    <location>
        <begin position="277"/>
        <end position="287"/>
    </location>
</feature>
<feature type="strand" evidence="1">
    <location>
        <begin position="293"/>
        <end position="300"/>
    </location>
</feature>
<feature type="helix" evidence="1">
    <location>
        <begin position="305"/>
        <end position="307"/>
    </location>
</feature>
<feature type="helix" evidence="1">
    <location>
        <begin position="315"/>
        <end position="319"/>
    </location>
</feature>
<feature type="strand" evidence="1">
    <location>
        <begin position="321"/>
        <end position="324"/>
    </location>
</feature>
<feature type="strand" evidence="1">
    <location>
        <begin position="329"/>
        <end position="331"/>
    </location>
</feature>
<feature type="strand" evidence="1">
    <location>
        <begin position="334"/>
        <end position="337"/>
    </location>
</feature>
<feature type="strand" evidence="1">
    <location>
        <begin position="340"/>
        <end position="342"/>
    </location>
</feature>
<feature type="helix" evidence="1">
    <location>
        <begin position="346"/>
        <end position="352"/>
    </location>
</feature>
<feature type="strand" evidence="1">
    <location>
        <begin position="357"/>
        <end position="359"/>
    </location>
</feature>
<feature type="helix" evidence="1">
    <location>
        <begin position="361"/>
        <end position="369"/>
    </location>
</feature>
<feature type="helix" evidence="1">
    <location>
        <begin position="379"/>
        <end position="394"/>
    </location>
</feature>
<feature type="turn" evidence="1">
    <location>
        <begin position="395"/>
        <end position="397"/>
    </location>
</feature>
<feature type="strand" evidence="1">
    <location>
        <begin position="398"/>
        <end position="402"/>
    </location>
</feature>
<keyword id="KW-0002">3D-structure</keyword>
<keyword id="KW-1185">Reference proteome</keyword>
<dbReference type="EMBL" id="AL123456">
    <property type="protein sequence ID" value="CCP44841.1"/>
    <property type="molecule type" value="Genomic_DNA"/>
</dbReference>
<dbReference type="PIR" id="F70764">
    <property type="entry name" value="F70764"/>
</dbReference>
<dbReference type="RefSeq" id="NP_216583.1">
    <property type="nucleotide sequence ID" value="NC_000962.3"/>
</dbReference>
<dbReference type="RefSeq" id="WP_003901321.1">
    <property type="nucleotide sequence ID" value="NZ_NVQJ01000047.1"/>
</dbReference>
<dbReference type="PDB" id="8HKR">
    <property type="method" value="X-ray"/>
    <property type="resolution" value="2.40 A"/>
    <property type="chains" value="A/B=1-407"/>
</dbReference>
<dbReference type="PDBsum" id="8HKR"/>
<dbReference type="SMR" id="P9WLL9"/>
<dbReference type="STRING" id="83332.Rv2067c"/>
<dbReference type="PaxDb" id="83332-Rv2067c"/>
<dbReference type="DNASU" id="888752"/>
<dbReference type="GeneID" id="888752"/>
<dbReference type="KEGG" id="mtu:Rv2067c"/>
<dbReference type="KEGG" id="mtv:RVBD_2067c"/>
<dbReference type="TubercuList" id="Rv2067c"/>
<dbReference type="eggNOG" id="COG0500">
    <property type="taxonomic scope" value="Bacteria"/>
</dbReference>
<dbReference type="InParanoid" id="P9WLL9"/>
<dbReference type="OrthoDB" id="649979at2"/>
<dbReference type="Proteomes" id="UP000001584">
    <property type="component" value="Chromosome"/>
</dbReference>
<dbReference type="GO" id="GO:0009274">
    <property type="term" value="C:peptidoglycan-based cell wall"/>
    <property type="evidence" value="ECO:0007005"/>
    <property type="project" value="MTBBASE"/>
</dbReference>
<dbReference type="GO" id="GO:0005886">
    <property type="term" value="C:plasma membrane"/>
    <property type="evidence" value="ECO:0007005"/>
    <property type="project" value="MTBBASE"/>
</dbReference>
<dbReference type="GO" id="GO:0008168">
    <property type="term" value="F:methyltransferase activity"/>
    <property type="evidence" value="ECO:0000318"/>
    <property type="project" value="GO_Central"/>
</dbReference>
<dbReference type="CDD" id="cd02440">
    <property type="entry name" value="AdoMet_MTases"/>
    <property type="match status" value="1"/>
</dbReference>
<dbReference type="FunFam" id="3.40.50.150:FF:000515">
    <property type="entry name" value="Asparaginyl-tRNA synthetase"/>
    <property type="match status" value="1"/>
</dbReference>
<dbReference type="Gene3D" id="3.40.50.150">
    <property type="entry name" value="Vaccinia Virus protein VP39"/>
    <property type="match status" value="1"/>
</dbReference>
<dbReference type="InterPro" id="IPR013217">
    <property type="entry name" value="Methyltransf_12"/>
</dbReference>
<dbReference type="InterPro" id="IPR029063">
    <property type="entry name" value="SAM-dependent_MTases_sf"/>
</dbReference>
<dbReference type="Pfam" id="PF08242">
    <property type="entry name" value="Methyltransf_12"/>
    <property type="match status" value="1"/>
</dbReference>
<dbReference type="SUPFAM" id="SSF53335">
    <property type="entry name" value="S-adenosyl-L-methionine-dependent methyltransferases"/>
    <property type="match status" value="1"/>
</dbReference>
<sequence length="407" mass="45930">MTDDHPRADIVSRQYHRWLYPHPIADLEAWTTANWEWFDPVHSHRILWPDREYRPDLDILIAGCGTNQAAIFAFTNRAAKVVAIDISRPALDHQQYLKDKHGLANLELHLLPIEELATLGRDFDLVVSTGVLHHLADPRAGMKELAHCLRRDGVVAAMLYGKYGRIGVELLGSVFRDLGLGQDDASIKLAKEAISLLPTYHPLRNYLTKARDLLSDSALVDTFLHGRQRSYTVEECVDLVTSAGLVFQGWFHKAPYYPHDFFVPNSEFYAAVNTLPEVKAWSVMERLETLNATHLFMACRRDRPKEQYTIDFSTVAALDYVPLMRTRCGVSGTDMFWPGWRMAPSPAQLAFLQQVDGRRTIREIAGCVARTGEPSGGSLADLEEFGRKLFQSLWRLDFVAVALPASG</sequence>
<protein>
    <recommendedName>
        <fullName>Uncharacterized protein Rv2067c</fullName>
    </recommendedName>
</protein>